<feature type="chain" id="PRO_0000349036" description="Heme A synthase">
    <location>
        <begin position="1"/>
        <end position="339"/>
    </location>
</feature>
<feature type="transmembrane region" description="Helical" evidence="1">
    <location>
        <begin position="7"/>
        <end position="27"/>
    </location>
</feature>
<feature type="transmembrane region" description="Helical" evidence="1">
    <location>
        <begin position="92"/>
        <end position="112"/>
    </location>
</feature>
<feature type="transmembrane region" description="Helical" evidence="1">
    <location>
        <begin position="126"/>
        <end position="146"/>
    </location>
</feature>
<feature type="transmembrane region" description="Helical" evidence="1">
    <location>
        <begin position="159"/>
        <end position="179"/>
    </location>
</feature>
<feature type="transmembrane region" description="Helical" evidence="1">
    <location>
        <begin position="199"/>
        <end position="219"/>
    </location>
</feature>
<feature type="transmembrane region" description="Helical" evidence="1">
    <location>
        <begin position="254"/>
        <end position="274"/>
    </location>
</feature>
<feature type="transmembrane region" description="Helical" evidence="1">
    <location>
        <begin position="291"/>
        <end position="311"/>
    </location>
</feature>
<feature type="transmembrane region" description="Helical" evidence="1">
    <location>
        <begin position="312"/>
        <end position="332"/>
    </location>
</feature>
<feature type="binding site" description="axial binding residue" evidence="1">
    <location>
        <position position="258"/>
    </location>
    <ligand>
        <name>heme</name>
        <dbReference type="ChEBI" id="CHEBI:30413"/>
    </ligand>
    <ligandPart>
        <name>Fe</name>
        <dbReference type="ChEBI" id="CHEBI:18248"/>
    </ligandPart>
</feature>
<feature type="binding site" description="axial binding residue" evidence="1">
    <location>
        <position position="319"/>
    </location>
    <ligand>
        <name>heme</name>
        <dbReference type="ChEBI" id="CHEBI:30413"/>
    </ligand>
    <ligandPart>
        <name>Fe</name>
        <dbReference type="ChEBI" id="CHEBI:18248"/>
    </ligandPart>
</feature>
<reference key="1">
    <citation type="journal article" date="2007" name="Nat. Biotechnol.">
        <title>Complete genome sequence of the fish pathogen Flavobacterium psychrophilum.</title>
        <authorList>
            <person name="Duchaud E."/>
            <person name="Boussaha M."/>
            <person name="Loux V."/>
            <person name="Bernardet J.-F."/>
            <person name="Michel C."/>
            <person name="Kerouault B."/>
            <person name="Mondot S."/>
            <person name="Nicolas P."/>
            <person name="Bossy R."/>
            <person name="Caron C."/>
            <person name="Bessieres P."/>
            <person name="Gibrat J.-F."/>
            <person name="Claverol S."/>
            <person name="Dumetz F."/>
            <person name="Le Henaff M."/>
            <person name="Benmansour A."/>
        </authorList>
    </citation>
    <scope>NUCLEOTIDE SEQUENCE [LARGE SCALE GENOMIC DNA]</scope>
    <source>
        <strain>ATCC 49511 / DSM 21280 / CIP 103535 / JIP02/86</strain>
    </source>
</reference>
<accession>A6H039</accession>
<name>CTAA_FLAPJ</name>
<gene>
    <name evidence="1" type="primary">ctaA</name>
    <name type="synonym">coxA</name>
    <name type="ordered locus">FP1645</name>
</gene>
<keyword id="KW-1003">Cell membrane</keyword>
<keyword id="KW-0350">Heme biosynthesis</keyword>
<keyword id="KW-0408">Iron</keyword>
<keyword id="KW-0472">Membrane</keyword>
<keyword id="KW-0479">Metal-binding</keyword>
<keyword id="KW-0560">Oxidoreductase</keyword>
<keyword id="KW-1185">Reference proteome</keyword>
<keyword id="KW-0812">Transmembrane</keyword>
<keyword id="KW-1133">Transmembrane helix</keyword>
<organism>
    <name type="scientific">Flavobacterium psychrophilum (strain ATCC 49511 / DSM 21280 / CIP 103535 / JIP02/86)</name>
    <dbReference type="NCBI Taxonomy" id="402612"/>
    <lineage>
        <taxon>Bacteria</taxon>
        <taxon>Pseudomonadati</taxon>
        <taxon>Bacteroidota</taxon>
        <taxon>Flavobacteriia</taxon>
        <taxon>Flavobacteriales</taxon>
        <taxon>Flavobacteriaceae</taxon>
        <taxon>Flavobacterium</taxon>
    </lineage>
</organism>
<protein>
    <recommendedName>
        <fullName evidence="1">Heme A synthase</fullName>
        <shortName evidence="1">HAS</shortName>
        <ecNumber evidence="1">1.17.99.9</ecNumber>
    </recommendedName>
    <alternativeName>
        <fullName evidence="1">Cytochrome aa3-controlling protein</fullName>
    </alternativeName>
</protein>
<comment type="function">
    <text evidence="1">Catalyzes the conversion of heme O to heme A by two successive hydroxylations of the methyl group at C8. The first hydroxylation forms heme I, the second hydroxylation results in an unstable dihydroxymethyl group, which spontaneously dehydrates, resulting in the formyl group of heme A.</text>
</comment>
<comment type="catalytic activity">
    <reaction evidence="1">
        <text>Fe(II)-heme o + 2 A + H2O = Fe(II)-heme a + 2 AH2</text>
        <dbReference type="Rhea" id="RHEA:63388"/>
        <dbReference type="ChEBI" id="CHEBI:13193"/>
        <dbReference type="ChEBI" id="CHEBI:15377"/>
        <dbReference type="ChEBI" id="CHEBI:17499"/>
        <dbReference type="ChEBI" id="CHEBI:60530"/>
        <dbReference type="ChEBI" id="CHEBI:61715"/>
        <dbReference type="EC" id="1.17.99.9"/>
    </reaction>
    <physiologicalReaction direction="left-to-right" evidence="1">
        <dbReference type="Rhea" id="RHEA:63389"/>
    </physiologicalReaction>
</comment>
<comment type="cofactor">
    <cofactor evidence="1">
        <name>heme b</name>
        <dbReference type="ChEBI" id="CHEBI:60344"/>
    </cofactor>
</comment>
<comment type="pathway">
    <text evidence="1">Porphyrin-containing compound metabolism; heme A biosynthesis; heme A from heme O: step 1/1.</text>
</comment>
<comment type="subunit">
    <text evidence="1">Interacts with CtaB.</text>
</comment>
<comment type="subcellular location">
    <subcellularLocation>
        <location evidence="1">Cell membrane</location>
        <topology evidence="1">Multi-pass membrane protein</topology>
    </subcellularLocation>
</comment>
<comment type="similarity">
    <text evidence="1">Belongs to the COX15/CtaA family. Type 2 subfamily.</text>
</comment>
<sequence length="339" mass="39167">MKNNKSVIIWLLSGCFLVFIMVVVGGITRLTNSGLSMTDWHLVTDTFPPLTEAKWEETFEKYKLFPEYQKINIHNDFTLSDYKFIYFWEWFHRFIGRIIGLVFIIPFIYFLIKKKLNTETLRKCAILLGMGAFQGFLGWFMVKSGLIDAPDVSHFRLSLHLTFAFITFAYTLWVALDLIYPEKKQVILPLRNIARITLAIIILQIIYGGFVAGLNAGLIHNHWPLMSDGQFFHESIILEKESWFARFTEGKSGVQFVHRTIAYFVAGLIVFLTFKSKKHTLSLEQKNGLNALLIIVFIQFTLGVLTLLYSVPLWLGVIHQAMAFILLATTTYTLHRFSK</sequence>
<proteinExistence type="inferred from homology"/>
<dbReference type="EC" id="1.17.99.9" evidence="1"/>
<dbReference type="EMBL" id="AM398681">
    <property type="protein sequence ID" value="CAL43712.1"/>
    <property type="molecule type" value="Genomic_DNA"/>
</dbReference>
<dbReference type="RefSeq" id="WP_011963757.1">
    <property type="nucleotide sequence ID" value="NC_009613.3"/>
</dbReference>
<dbReference type="RefSeq" id="YP_001296521.1">
    <property type="nucleotide sequence ID" value="NC_009613.3"/>
</dbReference>
<dbReference type="SMR" id="A6H039"/>
<dbReference type="STRING" id="402612.FP1645"/>
<dbReference type="EnsemblBacteria" id="CAL43712">
    <property type="protein sequence ID" value="CAL43712"/>
    <property type="gene ID" value="FP1645"/>
</dbReference>
<dbReference type="KEGG" id="fps:FP1645"/>
<dbReference type="PATRIC" id="fig|402612.5.peg.1659"/>
<dbReference type="eggNOG" id="COG1612">
    <property type="taxonomic scope" value="Bacteria"/>
</dbReference>
<dbReference type="HOGENOM" id="CLU_017627_0_0_10"/>
<dbReference type="OrthoDB" id="9793156at2"/>
<dbReference type="UniPathway" id="UPA00269">
    <property type="reaction ID" value="UER00713"/>
</dbReference>
<dbReference type="Proteomes" id="UP000006394">
    <property type="component" value="Chromosome"/>
</dbReference>
<dbReference type="GO" id="GO:0005886">
    <property type="term" value="C:plasma membrane"/>
    <property type="evidence" value="ECO:0007669"/>
    <property type="project" value="UniProtKB-SubCell"/>
</dbReference>
<dbReference type="GO" id="GO:0046872">
    <property type="term" value="F:metal ion binding"/>
    <property type="evidence" value="ECO:0007669"/>
    <property type="project" value="UniProtKB-KW"/>
</dbReference>
<dbReference type="GO" id="GO:0016653">
    <property type="term" value="F:oxidoreductase activity, acting on NAD(P)H, heme protein as acceptor"/>
    <property type="evidence" value="ECO:0007669"/>
    <property type="project" value="InterPro"/>
</dbReference>
<dbReference type="GO" id="GO:0006784">
    <property type="term" value="P:heme A biosynthetic process"/>
    <property type="evidence" value="ECO:0007669"/>
    <property type="project" value="UniProtKB-UniRule"/>
</dbReference>
<dbReference type="HAMAP" id="MF_01665">
    <property type="entry name" value="HemeA_synth_type2"/>
    <property type="match status" value="1"/>
</dbReference>
<dbReference type="InterPro" id="IPR003780">
    <property type="entry name" value="COX15/CtaA_fam"/>
</dbReference>
<dbReference type="InterPro" id="IPR023754">
    <property type="entry name" value="HemeA_Synthase_type2"/>
</dbReference>
<dbReference type="PANTHER" id="PTHR23289">
    <property type="entry name" value="CYTOCHROME C OXIDASE ASSEMBLY PROTEIN COX15"/>
    <property type="match status" value="1"/>
</dbReference>
<dbReference type="PANTHER" id="PTHR23289:SF2">
    <property type="entry name" value="CYTOCHROME C OXIDASE ASSEMBLY PROTEIN COX15 HOMOLOG"/>
    <property type="match status" value="1"/>
</dbReference>
<dbReference type="Pfam" id="PF02628">
    <property type="entry name" value="COX15-CtaA"/>
    <property type="match status" value="1"/>
</dbReference>
<evidence type="ECO:0000255" key="1">
    <source>
        <dbReference type="HAMAP-Rule" id="MF_01665"/>
    </source>
</evidence>